<sequence>MSLFEHGVKNLHTLVKDGEVKVSELVQESFDRIDRVDGKIGAFLSLNEDAFEQAKRMDEIAKHEANPLFGLPIGVKDNIVTKGMTTTCGSKFLENFVPAHDATVVERLHEAGAITIGKLNMDEFAMGSSNENSAYKPVRNPWNTKHVPGGSSGGSAAAVAAGEVLFSLGSDTGGSIRQPAAYCGVVGLKPTYGLVSRYGLVAFASSLDQIGPLTRTVEDNAYLLSAIAGHCDMDSTSANVNPTDYTQALTGDIKGLKIAVPKEYFGEGISEGVKENIRAAIKKLESLGATVDEVSLPNSKYALATYYLLASSEASSNLARFDGIRYGVRAEADALEDVFKYSRAQGFGDEVKRRIMLGTYALSSGYYDAYYKKAQQARTLIKHDFDQVLANYDVIIGPTAPTPAFELGAQNDDPVTMYANDILTIPINLAGVPAISVPAGLVDGLPVGLQIIGKHFDEATIYRAAHAFELATGGFALPKL</sequence>
<evidence type="ECO:0000255" key="1">
    <source>
        <dbReference type="HAMAP-Rule" id="MF_00120"/>
    </source>
</evidence>
<dbReference type="EC" id="6.3.5.7" evidence="1"/>
<dbReference type="EMBL" id="CP001022">
    <property type="protein sequence ID" value="ACB61959.1"/>
    <property type="molecule type" value="Genomic_DNA"/>
</dbReference>
<dbReference type="RefSeq" id="WP_012371375.1">
    <property type="nucleotide sequence ID" value="NC_010556.1"/>
</dbReference>
<dbReference type="SMR" id="B1YM01"/>
<dbReference type="STRING" id="262543.Exig_2509"/>
<dbReference type="KEGG" id="esi:Exig_2509"/>
<dbReference type="eggNOG" id="COG0154">
    <property type="taxonomic scope" value="Bacteria"/>
</dbReference>
<dbReference type="HOGENOM" id="CLU_009600_0_3_9"/>
<dbReference type="OrthoDB" id="9811471at2"/>
<dbReference type="Proteomes" id="UP000001681">
    <property type="component" value="Chromosome"/>
</dbReference>
<dbReference type="GO" id="GO:0030956">
    <property type="term" value="C:glutamyl-tRNA(Gln) amidotransferase complex"/>
    <property type="evidence" value="ECO:0007669"/>
    <property type="project" value="InterPro"/>
</dbReference>
<dbReference type="GO" id="GO:0005524">
    <property type="term" value="F:ATP binding"/>
    <property type="evidence" value="ECO:0007669"/>
    <property type="project" value="UniProtKB-KW"/>
</dbReference>
<dbReference type="GO" id="GO:0050567">
    <property type="term" value="F:glutaminyl-tRNA synthase (glutamine-hydrolyzing) activity"/>
    <property type="evidence" value="ECO:0007669"/>
    <property type="project" value="UniProtKB-UniRule"/>
</dbReference>
<dbReference type="GO" id="GO:0006412">
    <property type="term" value="P:translation"/>
    <property type="evidence" value="ECO:0007669"/>
    <property type="project" value="UniProtKB-UniRule"/>
</dbReference>
<dbReference type="Gene3D" id="3.90.1300.10">
    <property type="entry name" value="Amidase signature (AS) domain"/>
    <property type="match status" value="1"/>
</dbReference>
<dbReference type="HAMAP" id="MF_00120">
    <property type="entry name" value="GatA"/>
    <property type="match status" value="1"/>
</dbReference>
<dbReference type="InterPro" id="IPR000120">
    <property type="entry name" value="Amidase"/>
</dbReference>
<dbReference type="InterPro" id="IPR020556">
    <property type="entry name" value="Amidase_CS"/>
</dbReference>
<dbReference type="InterPro" id="IPR023631">
    <property type="entry name" value="Amidase_dom"/>
</dbReference>
<dbReference type="InterPro" id="IPR036928">
    <property type="entry name" value="AS_sf"/>
</dbReference>
<dbReference type="InterPro" id="IPR004412">
    <property type="entry name" value="GatA"/>
</dbReference>
<dbReference type="NCBIfam" id="TIGR00132">
    <property type="entry name" value="gatA"/>
    <property type="match status" value="1"/>
</dbReference>
<dbReference type="PANTHER" id="PTHR11895:SF151">
    <property type="entry name" value="GLUTAMYL-TRNA(GLN) AMIDOTRANSFERASE SUBUNIT A"/>
    <property type="match status" value="1"/>
</dbReference>
<dbReference type="PANTHER" id="PTHR11895">
    <property type="entry name" value="TRANSAMIDASE"/>
    <property type="match status" value="1"/>
</dbReference>
<dbReference type="Pfam" id="PF01425">
    <property type="entry name" value="Amidase"/>
    <property type="match status" value="1"/>
</dbReference>
<dbReference type="SUPFAM" id="SSF75304">
    <property type="entry name" value="Amidase signature (AS) enzymes"/>
    <property type="match status" value="1"/>
</dbReference>
<dbReference type="PROSITE" id="PS00571">
    <property type="entry name" value="AMIDASES"/>
    <property type="match status" value="1"/>
</dbReference>
<comment type="function">
    <text evidence="1">Allows the formation of correctly charged Gln-tRNA(Gln) through the transamidation of misacylated Glu-tRNA(Gln) in organisms which lack glutaminyl-tRNA synthetase. The reaction takes place in the presence of glutamine and ATP through an activated gamma-phospho-Glu-tRNA(Gln).</text>
</comment>
<comment type="catalytic activity">
    <reaction evidence="1">
        <text>L-glutamyl-tRNA(Gln) + L-glutamine + ATP + H2O = L-glutaminyl-tRNA(Gln) + L-glutamate + ADP + phosphate + H(+)</text>
        <dbReference type="Rhea" id="RHEA:17521"/>
        <dbReference type="Rhea" id="RHEA-COMP:9681"/>
        <dbReference type="Rhea" id="RHEA-COMP:9684"/>
        <dbReference type="ChEBI" id="CHEBI:15377"/>
        <dbReference type="ChEBI" id="CHEBI:15378"/>
        <dbReference type="ChEBI" id="CHEBI:29985"/>
        <dbReference type="ChEBI" id="CHEBI:30616"/>
        <dbReference type="ChEBI" id="CHEBI:43474"/>
        <dbReference type="ChEBI" id="CHEBI:58359"/>
        <dbReference type="ChEBI" id="CHEBI:78520"/>
        <dbReference type="ChEBI" id="CHEBI:78521"/>
        <dbReference type="ChEBI" id="CHEBI:456216"/>
        <dbReference type="EC" id="6.3.5.7"/>
    </reaction>
</comment>
<comment type="subunit">
    <text evidence="1">Heterotrimer of A, B and C subunits.</text>
</comment>
<comment type="similarity">
    <text evidence="1">Belongs to the amidase family. GatA subfamily.</text>
</comment>
<accession>B1YM01</accession>
<reference key="1">
    <citation type="submission" date="2008-04" db="EMBL/GenBank/DDBJ databases">
        <title>Complete sequence of chromosome of Exiguobacterium sibiricum 255-15.</title>
        <authorList>
            <consortium name="US DOE Joint Genome Institute"/>
            <person name="Copeland A."/>
            <person name="Lucas S."/>
            <person name="Lapidus A."/>
            <person name="Glavina del Rio T."/>
            <person name="Dalin E."/>
            <person name="Tice H."/>
            <person name="Bruce D."/>
            <person name="Goodwin L."/>
            <person name="Pitluck S."/>
            <person name="Kiss H."/>
            <person name="Chertkov O."/>
            <person name="Monk C."/>
            <person name="Brettin T."/>
            <person name="Detter J.C."/>
            <person name="Han C."/>
            <person name="Kuske C.R."/>
            <person name="Schmutz J."/>
            <person name="Larimer F."/>
            <person name="Land M."/>
            <person name="Hauser L."/>
            <person name="Kyrpides N."/>
            <person name="Mikhailova N."/>
            <person name="Vishnivetskaya T."/>
            <person name="Rodrigues D.F."/>
            <person name="Gilichinsky D."/>
            <person name="Tiedje J."/>
            <person name="Richardson P."/>
        </authorList>
    </citation>
    <scope>NUCLEOTIDE SEQUENCE [LARGE SCALE GENOMIC DNA]</scope>
    <source>
        <strain>DSM 17290 / CCUG 55495 / CIP 109462 / JCM 13490 / 255-15</strain>
    </source>
</reference>
<feature type="chain" id="PRO_1000095133" description="Glutamyl-tRNA(Gln) amidotransferase subunit A">
    <location>
        <begin position="1"/>
        <end position="480"/>
    </location>
</feature>
<feature type="active site" description="Charge relay system" evidence="1">
    <location>
        <position position="76"/>
    </location>
</feature>
<feature type="active site" description="Charge relay system" evidence="1">
    <location>
        <position position="151"/>
    </location>
</feature>
<feature type="active site" description="Acyl-ester intermediate" evidence="1">
    <location>
        <position position="175"/>
    </location>
</feature>
<proteinExistence type="inferred from homology"/>
<protein>
    <recommendedName>
        <fullName evidence="1">Glutamyl-tRNA(Gln) amidotransferase subunit A</fullName>
        <shortName evidence="1">Glu-ADT subunit A</shortName>
        <ecNumber evidence="1">6.3.5.7</ecNumber>
    </recommendedName>
</protein>
<keyword id="KW-0067">ATP-binding</keyword>
<keyword id="KW-0436">Ligase</keyword>
<keyword id="KW-0547">Nucleotide-binding</keyword>
<keyword id="KW-0648">Protein biosynthesis</keyword>
<keyword id="KW-1185">Reference proteome</keyword>
<organism>
    <name type="scientific">Exiguobacterium sibiricum (strain DSM 17290 / CCUG 55495 / CIP 109462 / JCM 13490 / 255-15)</name>
    <dbReference type="NCBI Taxonomy" id="262543"/>
    <lineage>
        <taxon>Bacteria</taxon>
        <taxon>Bacillati</taxon>
        <taxon>Bacillota</taxon>
        <taxon>Bacilli</taxon>
        <taxon>Bacillales</taxon>
        <taxon>Bacillales Family XII. Incertae Sedis</taxon>
        <taxon>Exiguobacterium</taxon>
    </lineage>
</organism>
<name>GATA_EXIS2</name>
<gene>
    <name evidence="1" type="primary">gatA</name>
    <name type="ordered locus">Exig_2509</name>
</gene>